<name>K1B2_BUNCI</name>
<organism>
    <name type="scientific">Bunodosoma caissarum</name>
    <name type="common">Sea anemone</name>
    <dbReference type="NCBI Taxonomy" id="31165"/>
    <lineage>
        <taxon>Eukaryota</taxon>
        <taxon>Metazoa</taxon>
        <taxon>Cnidaria</taxon>
        <taxon>Anthozoa</taxon>
        <taxon>Hexacorallia</taxon>
        <taxon>Actiniaria</taxon>
        <taxon>Actiniidae</taxon>
        <taxon>Bunodosoma</taxon>
    </lineage>
</organism>
<proteinExistence type="evidence at protein level"/>
<dbReference type="SMR" id="C0HJC3"/>
<dbReference type="GO" id="GO:0005576">
    <property type="term" value="C:extracellular region"/>
    <property type="evidence" value="ECO:0000314"/>
    <property type="project" value="UniProtKB"/>
</dbReference>
<dbReference type="GO" id="GO:0042151">
    <property type="term" value="C:nematocyst"/>
    <property type="evidence" value="ECO:0000303"/>
    <property type="project" value="UniProtKB"/>
</dbReference>
<dbReference type="GO" id="GO:0019870">
    <property type="term" value="F:potassium channel inhibitor activity"/>
    <property type="evidence" value="ECO:0000314"/>
    <property type="project" value="UniProtKB"/>
</dbReference>
<dbReference type="GO" id="GO:0090729">
    <property type="term" value="F:toxin activity"/>
    <property type="evidence" value="ECO:0007669"/>
    <property type="project" value="UniProtKB-KW"/>
</dbReference>
<dbReference type="GO" id="GO:0044562">
    <property type="term" value="P:envenomation resulting in negative regulation of voltage-gated potassium channel activity in another organism"/>
    <property type="evidence" value="ECO:0000314"/>
    <property type="project" value="UniProtKB"/>
</dbReference>
<dbReference type="InterPro" id="IPR003582">
    <property type="entry name" value="ShKT_dom"/>
</dbReference>
<dbReference type="Pfam" id="PF01549">
    <property type="entry name" value="ShK"/>
    <property type="match status" value="1"/>
</dbReference>
<dbReference type="SUPFAM" id="SSF57546">
    <property type="entry name" value="Crisp domain-like"/>
    <property type="match status" value="1"/>
</dbReference>
<dbReference type="PROSITE" id="PS51670">
    <property type="entry name" value="SHKT"/>
    <property type="match status" value="1"/>
</dbReference>
<feature type="peptide" id="PRO_0000423184" description="Kappa-actitoxin-Bcs3b" evidence="3">
    <location>
        <begin position="1"/>
        <end position="37"/>
    </location>
</feature>
<feature type="domain" description="ShKT" evidence="2">
    <location>
        <begin position="2"/>
        <end position="37"/>
    </location>
</feature>
<feature type="region of interest" description="Crucial for binding to potassium channels" evidence="1">
    <location>
        <begin position="25"/>
        <end position="26"/>
    </location>
</feature>
<feature type="site" description="Important for binding to potassium channels" evidence="1">
    <location>
        <position position="6"/>
    </location>
</feature>
<feature type="site" description="Important for binding to potassium channels" evidence="1">
    <location>
        <position position="13"/>
    </location>
</feature>
<feature type="site" description="Important for binding to potassium channels" evidence="1">
    <location>
        <position position="23"/>
    </location>
</feature>
<feature type="disulfide bond" evidence="1 2">
    <location>
        <begin position="2"/>
        <end position="37"/>
    </location>
</feature>
<feature type="disulfide bond" evidence="1 2">
    <location>
        <begin position="11"/>
        <end position="30"/>
    </location>
</feature>
<feature type="disulfide bond" evidence="1 2">
    <location>
        <begin position="20"/>
        <end position="34"/>
    </location>
</feature>
<comment type="function">
    <text evidence="3">Inhibits voltage-gated potassium channels (IC(50)=14.42 nM for rKCNA1/Kv1.1, IC(50)=80.4 nM for rKCNA2/Kv1.2, IC(50)=7.76 nM for rKCNA6/Kv1.6, IC(50)=13.12 nM for hKCNA3/Kv1.3, and IC(50)=49.14 nM for insect Shaker IR). Binds the Shaker IR channels in a voltage-independent manner.</text>
</comment>
<comment type="subcellular location">
    <subcellularLocation>
        <location evidence="3">Secreted</location>
    </subcellularLocation>
    <subcellularLocation>
        <location evidence="3">Nematocyst</location>
    </subcellularLocation>
</comment>
<comment type="mass spectrometry" mass="3914.52" method="MALDI" evidence="3"/>
<comment type="miscellaneous">
    <text evidence="3">No cytolytic activity on erythrocytes detected. Not active on rat KCNA4/Kv1.4 or KCNA5/Kv1.5 channels.</text>
</comment>
<comment type="similarity">
    <text evidence="5">Belongs to the sea anemone type 1 potassium channel toxin family. Type 1b subfamily.</text>
</comment>
<sequence length="37" mass="3919">ACKDGFPTATCQHAKLVGNCKNSQKYRANCAKTCGPC</sequence>
<evidence type="ECO:0000250" key="1">
    <source>
        <dbReference type="UniProtKB" id="P29186"/>
    </source>
</evidence>
<evidence type="ECO:0000255" key="2">
    <source>
        <dbReference type="PROSITE-ProRule" id="PRU01005"/>
    </source>
</evidence>
<evidence type="ECO:0000269" key="3">
    <source>
    </source>
</evidence>
<evidence type="ECO:0000303" key="4">
    <source>
    </source>
</evidence>
<evidence type="ECO:0000305" key="5"/>
<reference key="1">
    <citation type="journal article" date="2013" name="Mar. Drugs">
        <title>Biochemical and electrophysiological characterization of two sea anemone type 1 potassium toxins from a geographically distant population of Bunodosoma caissarum.</title>
        <authorList>
            <person name="Orts D.J."/>
            <person name="Peigneur S."/>
            <person name="Madio B."/>
            <person name="Cassoli J.S."/>
            <person name="Montandon G.G."/>
            <person name="Pimenta A.M."/>
            <person name="Bicudo J.E."/>
            <person name="Freitas J.C."/>
            <person name="Zaharenko A.J."/>
            <person name="Tytgat J."/>
        </authorList>
    </citation>
    <scope>PROTEIN SEQUENCE</scope>
    <scope>FUNCTION</scope>
    <scope>SUBCELLULAR LOCATION</scope>
    <scope>MASS SPECTROMETRY</scope>
</reference>
<accession>C0HJC3</accession>
<protein>
    <recommendedName>
        <fullName evidence="5">Kappa-actitoxin-Bcs3b</fullName>
        <shortName evidence="5">Kappa-AITX-Bcs3b</shortName>
    </recommendedName>
    <alternativeName>
        <fullName evidence="4">Potassium channel toxin BcsTx2</fullName>
        <shortName evidence="4">BcsTx2</shortName>
    </alternativeName>
</protein>
<keyword id="KW-0903">Direct protein sequencing</keyword>
<keyword id="KW-1015">Disulfide bond</keyword>
<keyword id="KW-0872">Ion channel impairing toxin</keyword>
<keyword id="KW-0166">Nematocyst</keyword>
<keyword id="KW-0528">Neurotoxin</keyword>
<keyword id="KW-0632">Potassium channel impairing toxin</keyword>
<keyword id="KW-0964">Secreted</keyword>
<keyword id="KW-0800">Toxin</keyword>
<keyword id="KW-1220">Voltage-gated potassium channel impairing toxin</keyword>